<reference key="1">
    <citation type="journal article" date="2005" name="Science">
        <title>The transcriptional landscape of the mammalian genome.</title>
        <authorList>
            <person name="Carninci P."/>
            <person name="Kasukawa T."/>
            <person name="Katayama S."/>
            <person name="Gough J."/>
            <person name="Frith M.C."/>
            <person name="Maeda N."/>
            <person name="Oyama R."/>
            <person name="Ravasi T."/>
            <person name="Lenhard B."/>
            <person name="Wells C."/>
            <person name="Kodzius R."/>
            <person name="Shimokawa K."/>
            <person name="Bajic V.B."/>
            <person name="Brenner S.E."/>
            <person name="Batalov S."/>
            <person name="Forrest A.R."/>
            <person name="Zavolan M."/>
            <person name="Davis M.J."/>
            <person name="Wilming L.G."/>
            <person name="Aidinis V."/>
            <person name="Allen J.E."/>
            <person name="Ambesi-Impiombato A."/>
            <person name="Apweiler R."/>
            <person name="Aturaliya R.N."/>
            <person name="Bailey T.L."/>
            <person name="Bansal M."/>
            <person name="Baxter L."/>
            <person name="Beisel K.W."/>
            <person name="Bersano T."/>
            <person name="Bono H."/>
            <person name="Chalk A.M."/>
            <person name="Chiu K.P."/>
            <person name="Choudhary V."/>
            <person name="Christoffels A."/>
            <person name="Clutterbuck D.R."/>
            <person name="Crowe M.L."/>
            <person name="Dalla E."/>
            <person name="Dalrymple B.P."/>
            <person name="de Bono B."/>
            <person name="Della Gatta G."/>
            <person name="di Bernardo D."/>
            <person name="Down T."/>
            <person name="Engstrom P."/>
            <person name="Fagiolini M."/>
            <person name="Faulkner G."/>
            <person name="Fletcher C.F."/>
            <person name="Fukushima T."/>
            <person name="Furuno M."/>
            <person name="Futaki S."/>
            <person name="Gariboldi M."/>
            <person name="Georgii-Hemming P."/>
            <person name="Gingeras T.R."/>
            <person name="Gojobori T."/>
            <person name="Green R.E."/>
            <person name="Gustincich S."/>
            <person name="Harbers M."/>
            <person name="Hayashi Y."/>
            <person name="Hensch T.K."/>
            <person name="Hirokawa N."/>
            <person name="Hill D."/>
            <person name="Huminiecki L."/>
            <person name="Iacono M."/>
            <person name="Ikeo K."/>
            <person name="Iwama A."/>
            <person name="Ishikawa T."/>
            <person name="Jakt M."/>
            <person name="Kanapin A."/>
            <person name="Katoh M."/>
            <person name="Kawasawa Y."/>
            <person name="Kelso J."/>
            <person name="Kitamura H."/>
            <person name="Kitano H."/>
            <person name="Kollias G."/>
            <person name="Krishnan S.P."/>
            <person name="Kruger A."/>
            <person name="Kummerfeld S.K."/>
            <person name="Kurochkin I.V."/>
            <person name="Lareau L.F."/>
            <person name="Lazarevic D."/>
            <person name="Lipovich L."/>
            <person name="Liu J."/>
            <person name="Liuni S."/>
            <person name="McWilliam S."/>
            <person name="Madan Babu M."/>
            <person name="Madera M."/>
            <person name="Marchionni L."/>
            <person name="Matsuda H."/>
            <person name="Matsuzawa S."/>
            <person name="Miki H."/>
            <person name="Mignone F."/>
            <person name="Miyake S."/>
            <person name="Morris K."/>
            <person name="Mottagui-Tabar S."/>
            <person name="Mulder N."/>
            <person name="Nakano N."/>
            <person name="Nakauchi H."/>
            <person name="Ng P."/>
            <person name="Nilsson R."/>
            <person name="Nishiguchi S."/>
            <person name="Nishikawa S."/>
            <person name="Nori F."/>
            <person name="Ohara O."/>
            <person name="Okazaki Y."/>
            <person name="Orlando V."/>
            <person name="Pang K.C."/>
            <person name="Pavan W.J."/>
            <person name="Pavesi G."/>
            <person name="Pesole G."/>
            <person name="Petrovsky N."/>
            <person name="Piazza S."/>
            <person name="Reed J."/>
            <person name="Reid J.F."/>
            <person name="Ring B.Z."/>
            <person name="Ringwald M."/>
            <person name="Rost B."/>
            <person name="Ruan Y."/>
            <person name="Salzberg S.L."/>
            <person name="Sandelin A."/>
            <person name="Schneider C."/>
            <person name="Schoenbach C."/>
            <person name="Sekiguchi K."/>
            <person name="Semple C.A."/>
            <person name="Seno S."/>
            <person name="Sessa L."/>
            <person name="Sheng Y."/>
            <person name="Shibata Y."/>
            <person name="Shimada H."/>
            <person name="Shimada K."/>
            <person name="Silva D."/>
            <person name="Sinclair B."/>
            <person name="Sperling S."/>
            <person name="Stupka E."/>
            <person name="Sugiura K."/>
            <person name="Sultana R."/>
            <person name="Takenaka Y."/>
            <person name="Taki K."/>
            <person name="Tammoja K."/>
            <person name="Tan S.L."/>
            <person name="Tang S."/>
            <person name="Taylor M.S."/>
            <person name="Tegner J."/>
            <person name="Teichmann S.A."/>
            <person name="Ueda H.R."/>
            <person name="van Nimwegen E."/>
            <person name="Verardo R."/>
            <person name="Wei C.L."/>
            <person name="Yagi K."/>
            <person name="Yamanishi H."/>
            <person name="Zabarovsky E."/>
            <person name="Zhu S."/>
            <person name="Zimmer A."/>
            <person name="Hide W."/>
            <person name="Bult C."/>
            <person name="Grimmond S.M."/>
            <person name="Teasdale R.D."/>
            <person name="Liu E.T."/>
            <person name="Brusic V."/>
            <person name="Quackenbush J."/>
            <person name="Wahlestedt C."/>
            <person name="Mattick J.S."/>
            <person name="Hume D.A."/>
            <person name="Kai C."/>
            <person name="Sasaki D."/>
            <person name="Tomaru Y."/>
            <person name="Fukuda S."/>
            <person name="Kanamori-Katayama M."/>
            <person name="Suzuki M."/>
            <person name="Aoki J."/>
            <person name="Arakawa T."/>
            <person name="Iida J."/>
            <person name="Imamura K."/>
            <person name="Itoh M."/>
            <person name="Kato T."/>
            <person name="Kawaji H."/>
            <person name="Kawagashira N."/>
            <person name="Kawashima T."/>
            <person name="Kojima M."/>
            <person name="Kondo S."/>
            <person name="Konno H."/>
            <person name="Nakano K."/>
            <person name="Ninomiya N."/>
            <person name="Nishio T."/>
            <person name="Okada M."/>
            <person name="Plessy C."/>
            <person name="Shibata K."/>
            <person name="Shiraki T."/>
            <person name="Suzuki S."/>
            <person name="Tagami M."/>
            <person name="Waki K."/>
            <person name="Watahiki A."/>
            <person name="Okamura-Oho Y."/>
            <person name="Suzuki H."/>
            <person name="Kawai J."/>
            <person name="Hayashizaki Y."/>
        </authorList>
    </citation>
    <scope>NUCLEOTIDE SEQUENCE [LARGE SCALE MRNA]</scope>
    <source>
        <strain>C57BL/6J</strain>
        <tissue>Thymus</tissue>
    </source>
</reference>
<reference key="2">
    <citation type="journal article" date="2004" name="Genome Res.">
        <title>The status, quality, and expansion of the NIH full-length cDNA project: the Mammalian Gene Collection (MGC).</title>
        <authorList>
            <consortium name="The MGC Project Team"/>
        </authorList>
    </citation>
    <scope>NUCLEOTIDE SEQUENCE [LARGE SCALE MRNA]</scope>
    <source>
        <strain>FVB/N</strain>
        <tissue>Mammary tumor</tissue>
    </source>
</reference>
<reference key="3">
    <citation type="submission" date="2007-04" db="UniProtKB">
        <authorList>
            <person name="Lubec G."/>
            <person name="Kang S.U."/>
        </authorList>
    </citation>
    <scope>PROTEIN SEQUENCE OF 137-150 AND 157-165</scope>
    <scope>IDENTIFICATION BY MASS SPECTROMETRY</scope>
    <source>
        <strain>C57BL/6J</strain>
        <tissue>Brain</tissue>
    </source>
</reference>
<reference key="4">
    <citation type="journal article" date="2010" name="Cell">
        <title>A tissue-specific atlas of mouse protein phosphorylation and expression.</title>
        <authorList>
            <person name="Huttlin E.L."/>
            <person name="Jedrychowski M.P."/>
            <person name="Elias J.E."/>
            <person name="Goswami T."/>
            <person name="Rad R."/>
            <person name="Beausoleil S.A."/>
            <person name="Villen J."/>
            <person name="Haas W."/>
            <person name="Sowa M.E."/>
            <person name="Gygi S.P."/>
        </authorList>
    </citation>
    <scope>IDENTIFICATION BY MASS SPECTROMETRY [LARGE SCALE ANALYSIS]</scope>
    <source>
        <tissue>Brain</tissue>
        <tissue>Brown adipose tissue</tissue>
        <tissue>Heart</tissue>
        <tissue>Kidney</tissue>
        <tissue>Liver</tissue>
        <tissue>Lung</tissue>
        <tissue>Pancreas</tissue>
        <tissue>Spleen</tissue>
        <tissue>Testis</tissue>
    </source>
</reference>
<reference key="5">
    <citation type="journal article" date="2013" name="Mol. Cell">
        <title>SIRT5-mediated lysine desuccinylation impacts diverse metabolic pathways.</title>
        <authorList>
            <person name="Park J."/>
            <person name="Chen Y."/>
            <person name="Tishkoff D.X."/>
            <person name="Peng C."/>
            <person name="Tan M."/>
            <person name="Dai L."/>
            <person name="Xie Z."/>
            <person name="Zhang Y."/>
            <person name="Zwaans B.M."/>
            <person name="Skinner M.E."/>
            <person name="Lombard D.B."/>
            <person name="Zhao Y."/>
        </authorList>
    </citation>
    <scope>SUCCINYLATION [LARGE SCALE ANALYSIS] AT LYS-136 AND LYS-165</scope>
    <scope>IDENTIFICATION BY MASS SPECTROMETRY [LARGE SCALE ANALYSIS]</scope>
    <source>
        <tissue>Liver</tissue>
    </source>
</reference>
<reference key="6">
    <citation type="journal article" date="2013" name="Proc. Natl. Acad. Sci. U.S.A.">
        <title>Label-free quantitative proteomics of the lysine acetylome in mitochondria identifies substrates of SIRT3 in metabolic pathways.</title>
        <authorList>
            <person name="Rardin M.J."/>
            <person name="Newman J.C."/>
            <person name="Held J.M."/>
            <person name="Cusack M.P."/>
            <person name="Sorensen D.J."/>
            <person name="Li B."/>
            <person name="Schilling B."/>
            <person name="Mooney S.D."/>
            <person name="Kahn C.R."/>
            <person name="Verdin E."/>
            <person name="Gibson B.W."/>
        </authorList>
    </citation>
    <scope>ACETYLATION [LARGE SCALE ANALYSIS] AT LYS-136 AND LYS-165</scope>
    <scope>IDENTIFICATION BY MASS SPECTROMETRY [LARGE SCALE ANALYSIS]</scope>
    <source>
        <tissue>Liver</tissue>
    </source>
</reference>
<protein>
    <recommendedName>
        <fullName evidence="5">ATP synthase F(1) complex subunit delta, mitochondrial</fullName>
    </recommendedName>
    <alternativeName>
        <fullName evidence="4">ATP synthase F1 subunit delta</fullName>
    </alternativeName>
    <alternativeName>
        <fullName>F-ATPase delta subunit</fullName>
    </alternativeName>
</protein>
<dbReference type="EMBL" id="AK018011">
    <property type="protein sequence ID" value="BAB31035.1"/>
    <property type="molecule type" value="mRNA"/>
</dbReference>
<dbReference type="EMBL" id="BC008273">
    <property type="protein sequence ID" value="AAH08273.1"/>
    <property type="molecule type" value="mRNA"/>
</dbReference>
<dbReference type="CCDS" id="CCDS24010.1"/>
<dbReference type="RefSeq" id="NP_079589.2">
    <property type="nucleotide sequence ID" value="NM_025313.3"/>
</dbReference>
<dbReference type="RefSeq" id="XP_017169541.1">
    <property type="nucleotide sequence ID" value="XM_017314052.3"/>
</dbReference>
<dbReference type="RefSeq" id="XP_030101070.1">
    <property type="nucleotide sequence ID" value="XM_030245210.2"/>
</dbReference>
<dbReference type="RefSeq" id="XP_030101071.1">
    <property type="nucleotide sequence ID" value="XM_030245211.2"/>
</dbReference>
<dbReference type="RefSeq" id="XP_030101072.1">
    <property type="nucleotide sequence ID" value="XM_030245212.2"/>
</dbReference>
<dbReference type="RefSeq" id="XP_036011835.1">
    <property type="nucleotide sequence ID" value="XM_036155942.1"/>
</dbReference>
<dbReference type="SMR" id="Q9D3D9"/>
<dbReference type="BioGRID" id="211172">
    <property type="interactions" value="57"/>
</dbReference>
<dbReference type="FunCoup" id="Q9D3D9">
    <property type="interactions" value="1899"/>
</dbReference>
<dbReference type="IntAct" id="Q9D3D9">
    <property type="interactions" value="3"/>
</dbReference>
<dbReference type="STRING" id="10090.ENSMUSP00000101006"/>
<dbReference type="GlyGen" id="Q9D3D9">
    <property type="glycosylation" value="1 site, 1 O-linked glycan (1 site)"/>
</dbReference>
<dbReference type="iPTMnet" id="Q9D3D9"/>
<dbReference type="PhosphoSitePlus" id="Q9D3D9"/>
<dbReference type="jPOST" id="Q9D3D9"/>
<dbReference type="PaxDb" id="10090-ENSMUSP00000101006"/>
<dbReference type="PeptideAtlas" id="Q9D3D9"/>
<dbReference type="ProteomicsDB" id="277092"/>
<dbReference type="Pumba" id="Q9D3D9"/>
<dbReference type="TopDownProteomics" id="Q9D3D9"/>
<dbReference type="Antibodypedia" id="1258">
    <property type="antibodies" value="307 antibodies from 30 providers"/>
</dbReference>
<dbReference type="DNASU" id="66043"/>
<dbReference type="Ensembl" id="ENSMUST00000003156.15">
    <property type="protein sequence ID" value="ENSMUSP00000003156.9"/>
    <property type="gene ID" value="ENSMUSG00000003072.16"/>
</dbReference>
<dbReference type="Ensembl" id="ENSMUST00000105367.8">
    <property type="protein sequence ID" value="ENSMUSP00000101006.2"/>
    <property type="gene ID" value="ENSMUSG00000003072.16"/>
</dbReference>
<dbReference type="GeneID" id="66043"/>
<dbReference type="KEGG" id="mmu:66043"/>
<dbReference type="UCSC" id="uc007gby.2">
    <property type="organism name" value="mouse"/>
</dbReference>
<dbReference type="AGR" id="MGI:1913293"/>
<dbReference type="CTD" id="513"/>
<dbReference type="MGI" id="MGI:1913293">
    <property type="gene designation" value="Atp5f1d"/>
</dbReference>
<dbReference type="VEuPathDB" id="HostDB:ENSMUSG00000003072"/>
<dbReference type="eggNOG" id="KOG1758">
    <property type="taxonomic scope" value="Eukaryota"/>
</dbReference>
<dbReference type="GeneTree" id="ENSGT00390000017576"/>
<dbReference type="HOGENOM" id="CLU_084338_0_1_1"/>
<dbReference type="InParanoid" id="Q9D3D9"/>
<dbReference type="OMA" id="PHQTIYR"/>
<dbReference type="OrthoDB" id="270171at2759"/>
<dbReference type="PhylomeDB" id="Q9D3D9"/>
<dbReference type="TreeFam" id="TF313029"/>
<dbReference type="Reactome" id="R-MMU-163210">
    <property type="pathway name" value="Formation of ATP by chemiosmotic coupling"/>
</dbReference>
<dbReference type="Reactome" id="R-MMU-8949613">
    <property type="pathway name" value="Cristae formation"/>
</dbReference>
<dbReference type="BioGRID-ORCS" id="66043">
    <property type="hits" value="23 hits in 75 CRISPR screens"/>
</dbReference>
<dbReference type="CD-CODE" id="CE726F99">
    <property type="entry name" value="Postsynaptic density"/>
</dbReference>
<dbReference type="ChiTaRS" id="Atp5d">
    <property type="organism name" value="mouse"/>
</dbReference>
<dbReference type="PRO" id="PR:Q9D3D9"/>
<dbReference type="Proteomes" id="UP000000589">
    <property type="component" value="Chromosome 10"/>
</dbReference>
<dbReference type="RNAct" id="Q9D3D9">
    <property type="molecule type" value="protein"/>
</dbReference>
<dbReference type="Bgee" id="ENSMUSG00000003072">
    <property type="expression patterns" value="Expressed in heart right ventricle and 261 other cell types or tissues"/>
</dbReference>
<dbReference type="ExpressionAtlas" id="Q9D3D9">
    <property type="expression patterns" value="baseline and differential"/>
</dbReference>
<dbReference type="GO" id="GO:0005740">
    <property type="term" value="C:mitochondrial envelope"/>
    <property type="evidence" value="ECO:0000266"/>
    <property type="project" value="MGI"/>
</dbReference>
<dbReference type="GO" id="GO:0005743">
    <property type="term" value="C:mitochondrial inner membrane"/>
    <property type="evidence" value="ECO:0007005"/>
    <property type="project" value="MGI"/>
</dbReference>
<dbReference type="GO" id="GO:0005739">
    <property type="term" value="C:mitochondrion"/>
    <property type="evidence" value="ECO:0007005"/>
    <property type="project" value="MGI"/>
</dbReference>
<dbReference type="GO" id="GO:0045259">
    <property type="term" value="C:proton-transporting ATP synthase complex"/>
    <property type="evidence" value="ECO:0000250"/>
    <property type="project" value="UniProtKB"/>
</dbReference>
<dbReference type="GO" id="GO:0015078">
    <property type="term" value="F:proton transmembrane transporter activity"/>
    <property type="evidence" value="ECO:0000266"/>
    <property type="project" value="MGI"/>
</dbReference>
<dbReference type="GO" id="GO:0046933">
    <property type="term" value="F:proton-transporting ATP synthase activity, rotational mechanism"/>
    <property type="evidence" value="ECO:0007669"/>
    <property type="project" value="Ensembl"/>
</dbReference>
<dbReference type="GO" id="GO:0005198">
    <property type="term" value="F:structural molecule activity"/>
    <property type="evidence" value="ECO:0000250"/>
    <property type="project" value="UniProtKB"/>
</dbReference>
<dbReference type="GO" id="GO:0009060">
    <property type="term" value="P:aerobic respiration"/>
    <property type="evidence" value="ECO:0000250"/>
    <property type="project" value="UniProtKB"/>
</dbReference>
<dbReference type="GO" id="GO:0033615">
    <property type="term" value="P:mitochondrial proton-transporting ATP synthase complex assembly"/>
    <property type="evidence" value="ECO:0000250"/>
    <property type="project" value="UniProtKB"/>
</dbReference>
<dbReference type="GO" id="GO:0042776">
    <property type="term" value="P:proton motive force-driven mitochondrial ATP synthesis"/>
    <property type="evidence" value="ECO:0007669"/>
    <property type="project" value="Ensembl"/>
</dbReference>
<dbReference type="GO" id="GO:1902600">
    <property type="term" value="P:proton transmembrane transport"/>
    <property type="evidence" value="ECO:0000266"/>
    <property type="project" value="MGI"/>
</dbReference>
<dbReference type="CDD" id="cd12152">
    <property type="entry name" value="F1-ATPase_delta"/>
    <property type="match status" value="1"/>
</dbReference>
<dbReference type="FunFam" id="1.20.5.440:FF:000002">
    <property type="entry name" value="ATP synthase subunit delta, mitochondrial"/>
    <property type="match status" value="1"/>
</dbReference>
<dbReference type="FunFam" id="2.60.15.10:FF:000004">
    <property type="entry name" value="ATP synthase subunit delta, mitochondrial"/>
    <property type="match status" value="1"/>
</dbReference>
<dbReference type="Gene3D" id="1.20.5.440">
    <property type="entry name" value="ATP synthase delta/epsilon subunit, C-terminal domain"/>
    <property type="match status" value="1"/>
</dbReference>
<dbReference type="Gene3D" id="2.60.15.10">
    <property type="entry name" value="F0F1 ATP synthase delta/epsilon subunit, N-terminal"/>
    <property type="match status" value="1"/>
</dbReference>
<dbReference type="HAMAP" id="MF_00530">
    <property type="entry name" value="ATP_synth_epsil_bac"/>
    <property type="match status" value="1"/>
</dbReference>
<dbReference type="InterPro" id="IPR036794">
    <property type="entry name" value="ATP_F1_dsu/esu_C_sf"/>
</dbReference>
<dbReference type="InterPro" id="IPR001469">
    <property type="entry name" value="ATP_synth_F1_dsu/esu"/>
</dbReference>
<dbReference type="InterPro" id="IPR020546">
    <property type="entry name" value="ATP_synth_F1_dsu/esu_N"/>
</dbReference>
<dbReference type="InterPro" id="IPR048937">
    <property type="entry name" value="ATPD_C_metazoa"/>
</dbReference>
<dbReference type="InterPro" id="IPR036771">
    <property type="entry name" value="ATPsynth_dsu/esu_N"/>
</dbReference>
<dbReference type="NCBIfam" id="TIGR01216">
    <property type="entry name" value="ATP_synt_epsi"/>
    <property type="match status" value="1"/>
</dbReference>
<dbReference type="PANTHER" id="PTHR13822">
    <property type="entry name" value="ATP SYNTHASE DELTA/EPSILON CHAIN"/>
    <property type="match status" value="1"/>
</dbReference>
<dbReference type="PANTHER" id="PTHR13822:SF7">
    <property type="entry name" value="ATP SYNTHASE SUBUNIT DELTA, MITOCHONDRIAL"/>
    <property type="match status" value="1"/>
</dbReference>
<dbReference type="Pfam" id="PF02823">
    <property type="entry name" value="ATP-synt_DE_N"/>
    <property type="match status" value="1"/>
</dbReference>
<dbReference type="Pfam" id="PF21335">
    <property type="entry name" value="ATPD_C_metazoa"/>
    <property type="match status" value="1"/>
</dbReference>
<dbReference type="SUPFAM" id="SSF46604">
    <property type="entry name" value="Epsilon subunit of F1F0-ATP synthase C-terminal domain"/>
    <property type="match status" value="1"/>
</dbReference>
<dbReference type="SUPFAM" id="SSF51344">
    <property type="entry name" value="Epsilon subunit of F1F0-ATP synthase N-terminal domain"/>
    <property type="match status" value="1"/>
</dbReference>
<keyword id="KW-0007">Acetylation</keyword>
<keyword id="KW-0066">ATP synthesis</keyword>
<keyword id="KW-0139">CF(1)</keyword>
<keyword id="KW-0903">Direct protein sequencing</keyword>
<keyword id="KW-0375">Hydrogen ion transport</keyword>
<keyword id="KW-0406">Ion transport</keyword>
<keyword id="KW-0472">Membrane</keyword>
<keyword id="KW-0496">Mitochondrion</keyword>
<keyword id="KW-0999">Mitochondrion inner membrane</keyword>
<keyword id="KW-1185">Reference proteome</keyword>
<keyword id="KW-0809">Transit peptide</keyword>
<keyword id="KW-0813">Transport</keyword>
<organism>
    <name type="scientific">Mus musculus</name>
    <name type="common">Mouse</name>
    <dbReference type="NCBI Taxonomy" id="10090"/>
    <lineage>
        <taxon>Eukaryota</taxon>
        <taxon>Metazoa</taxon>
        <taxon>Chordata</taxon>
        <taxon>Craniata</taxon>
        <taxon>Vertebrata</taxon>
        <taxon>Euteleostomi</taxon>
        <taxon>Mammalia</taxon>
        <taxon>Eutheria</taxon>
        <taxon>Euarchontoglires</taxon>
        <taxon>Glires</taxon>
        <taxon>Rodentia</taxon>
        <taxon>Myomorpha</taxon>
        <taxon>Muroidea</taxon>
        <taxon>Muridae</taxon>
        <taxon>Murinae</taxon>
        <taxon>Mus</taxon>
        <taxon>Mus</taxon>
    </lineage>
</organism>
<feature type="transit peptide" description="Mitochondrion" evidence="1">
    <location>
        <begin position="1"/>
        <end position="22"/>
    </location>
</feature>
<feature type="chain" id="PRO_0000002662" description="ATP synthase F(1) complex subunit delta, mitochondrial">
    <location>
        <begin position="23"/>
        <end position="168"/>
    </location>
</feature>
<feature type="modified residue" description="N6-acetyllysine; alternate" evidence="6">
    <location>
        <position position="136"/>
    </location>
</feature>
<feature type="modified residue" description="N6-succinyllysine; alternate" evidence="7">
    <location>
        <position position="136"/>
    </location>
</feature>
<feature type="modified residue" description="N6-acetyllysine; alternate" evidence="6">
    <location>
        <position position="165"/>
    </location>
</feature>
<feature type="modified residue" description="N6-succinyllysine; alternate" evidence="7">
    <location>
        <position position="165"/>
    </location>
</feature>
<accession>Q9D3D9</accession>
<proteinExistence type="evidence at protein level"/>
<sequence length="168" mass="17600">MLPASLLRHPGLRRLMLQARTYAEAAAAPAPAAGPGQMSFTFASPTQVFFDSANVKQVDVPTLTGAFGILASHVPTLQVLRPGLVVVHTEDGTTTKYFVSSGSVTVNADSSVQLLAEEAVTLDMLDLGAARANLEKAQSELSGAADEAARAEIQIRIEANEALVKALE</sequence>
<gene>
    <name evidence="4" type="primary">Atp5f1d</name>
    <name type="synonym">Atp5d</name>
</gene>
<evidence type="ECO:0000250" key="1"/>
<evidence type="ECO:0000250" key="2">
    <source>
        <dbReference type="UniProtKB" id="P05630"/>
    </source>
</evidence>
<evidence type="ECO:0000250" key="3">
    <source>
        <dbReference type="UniProtKB" id="P19483"/>
    </source>
</evidence>
<evidence type="ECO:0000250" key="4">
    <source>
        <dbReference type="UniProtKB" id="P30049"/>
    </source>
</evidence>
<evidence type="ECO:0000305" key="5"/>
<evidence type="ECO:0007744" key="6">
    <source>
    </source>
</evidence>
<evidence type="ECO:0007744" key="7">
    <source>
    </source>
</evidence>
<comment type="function">
    <text evidence="3 4">Subunit delta, of the mitochondrial membrane ATP synthase complex (F(1)F(0) ATP synthase or Complex V) that produces ATP from ADP in the presence of a proton gradient across the membrane which is generated by electron transport complexes of the respiratory chain. ATP synthase complex consist of a soluble F(1) head domain - the catalytic core - and a membrane F(1) domain - the membrane proton channel. These two domains are linked by a central stalk rotating inside the F(1) region and a stationary peripheral stalk. During catalysis, ATP synthesis in the catalytic domain of F(1) is coupled via a rotary mechanism of the central stalk subunits to proton translocation (By similarity). In vivo, can only synthesize ATP although its ATP hydrolase activity can be activated artificially in vitro (By similarity). With the central stalk subunit gamma, is essential for the biogenesis of F(1) catalytic part of the ATP synthase complex namely in the formation of F1 assembly intermediate (By similarity).</text>
</comment>
<comment type="subunit">
    <text evidence="2 4">Component of the ATP synthase complex composed at least of ATP5F1A/subunit alpha, ATP5F1B/subunit beta, ATP5MC1/subunit c (homooctomer), MT-ATP6/subunit a, MT-ATP8/subunit 8, ATP5ME/subunit e, ATP5MF/subunit f, ATP5MG/subunit g, ATP5MK/subunit k, ATP5MJ/subunit j, ATP5F1C/subunit gamma, ATP5F1D/subunit delta, ATP5F1E/subunit epsilon, ATP5PF/subunit F6, ATP5PB/subunit b, ATP5PD/subunit d, ATP5PO/subunit OSCP. ATP synthase complex consists of a soluble F(1) head domain (subunits alpha(3) and beta(3)) - the catalytic core - and a membrane F(0) domain - the membrane proton channel (subunits c, a, 8, e, f, g, k and j). These two domains are linked by a central stalk (subunits gamma, delta, and epsilon) rotating inside the F1 region and a stationary peripheral stalk (subunits F6, b, d, and OSCP) (By similarity). Component of a complex composed at least by ATPIF1, ATP5F1A, ATP5F1B, ATP5F1C AND ATP5F1E (By similarity).</text>
</comment>
<comment type="subcellular location">
    <subcellularLocation>
        <location>Mitochondrion</location>
    </subcellularLocation>
    <subcellularLocation>
        <location>Mitochondrion inner membrane</location>
    </subcellularLocation>
</comment>
<comment type="similarity">
    <text evidence="5">Belongs to the ATPase epsilon chain family.</text>
</comment>
<name>ATPD_MOUSE</name>